<proteinExistence type="inferred from homology"/>
<dbReference type="EC" id="3.4.-.-" evidence="1"/>
<dbReference type="EMBL" id="CP001404">
    <property type="protein sequence ID" value="ACP48487.1"/>
    <property type="molecule type" value="Genomic_DNA"/>
</dbReference>
<dbReference type="RefSeq" id="WP_012717433.1">
    <property type="nucleotide sequence ID" value="NC_012623.1"/>
</dbReference>
<dbReference type="SMR" id="C3NH77"/>
<dbReference type="GeneID" id="7809787"/>
<dbReference type="KEGG" id="sin:YN1551_1395"/>
<dbReference type="HOGENOM" id="CLU_108521_2_0_2"/>
<dbReference type="Proteomes" id="UP000006818">
    <property type="component" value="Chromosome"/>
</dbReference>
<dbReference type="GO" id="GO:0008237">
    <property type="term" value="F:metallopeptidase activity"/>
    <property type="evidence" value="ECO:0007669"/>
    <property type="project" value="UniProtKB-UniRule"/>
</dbReference>
<dbReference type="GO" id="GO:0008270">
    <property type="term" value="F:zinc ion binding"/>
    <property type="evidence" value="ECO:0007669"/>
    <property type="project" value="UniProtKB-UniRule"/>
</dbReference>
<dbReference type="GO" id="GO:0006508">
    <property type="term" value="P:proteolysis"/>
    <property type="evidence" value="ECO:0007669"/>
    <property type="project" value="UniProtKB-UniRule"/>
</dbReference>
<dbReference type="CDD" id="cd11375">
    <property type="entry name" value="Peptidase_M54"/>
    <property type="match status" value="1"/>
</dbReference>
<dbReference type="Gene3D" id="3.40.390.10">
    <property type="entry name" value="Collagenase (Catalytic Domain)"/>
    <property type="match status" value="1"/>
</dbReference>
<dbReference type="HAMAP" id="MF_01842">
    <property type="entry name" value="Archaemetzincin"/>
    <property type="match status" value="1"/>
</dbReference>
<dbReference type="InterPro" id="IPR024079">
    <property type="entry name" value="MetalloPept_cat_dom_sf"/>
</dbReference>
<dbReference type="InterPro" id="IPR012962">
    <property type="entry name" value="Pept_M54_archaemetzincn"/>
</dbReference>
<dbReference type="InterPro" id="IPR012091">
    <property type="entry name" value="Pept_M54_archaemetzncn_arc/bac"/>
</dbReference>
<dbReference type="NCBIfam" id="NF033823">
    <property type="entry name" value="archmetzin"/>
    <property type="match status" value="1"/>
</dbReference>
<dbReference type="PANTHER" id="PTHR15910">
    <property type="entry name" value="ARCHAEMETZINCIN"/>
    <property type="match status" value="1"/>
</dbReference>
<dbReference type="PANTHER" id="PTHR15910:SF1">
    <property type="entry name" value="ARCHAEMETZINCIN-2"/>
    <property type="match status" value="1"/>
</dbReference>
<dbReference type="Pfam" id="PF07998">
    <property type="entry name" value="Peptidase_M54"/>
    <property type="match status" value="1"/>
</dbReference>
<dbReference type="PIRSF" id="PIRSF005785">
    <property type="entry name" value="Zn-prot_arch"/>
    <property type="match status" value="1"/>
</dbReference>
<dbReference type="SUPFAM" id="SSF55486">
    <property type="entry name" value="Metalloproteases ('zincins'), catalytic domain"/>
    <property type="match status" value="1"/>
</dbReference>
<comment type="function">
    <text evidence="1">Probable zinc metalloprotease whose natural substrate is unknown.</text>
</comment>
<comment type="cofactor">
    <cofactor evidence="1">
        <name>Zn(2+)</name>
        <dbReference type="ChEBI" id="CHEBI:29105"/>
    </cofactor>
    <text evidence="1">Binds 2 Zn(2+) ions per subunit. One is catalytic, whereas the other seems to have a structural role.</text>
</comment>
<comment type="subunit">
    <text evidence="1">Monomer.</text>
</comment>
<comment type="similarity">
    <text evidence="1">Belongs to the peptidase M54 family.</text>
</comment>
<reference key="1">
    <citation type="journal article" date="2009" name="Proc. Natl. Acad. Sci. U.S.A.">
        <title>Biogeography of the Sulfolobus islandicus pan-genome.</title>
        <authorList>
            <person name="Reno M.L."/>
            <person name="Held N.L."/>
            <person name="Fields C.J."/>
            <person name="Burke P.V."/>
            <person name="Whitaker R.J."/>
        </authorList>
    </citation>
    <scope>NUCLEOTIDE SEQUENCE [LARGE SCALE GENOMIC DNA]</scope>
    <source>
        <strain>Y.N.15.51 / Yellowstone #2</strain>
    </source>
</reference>
<keyword id="KW-0378">Hydrolase</keyword>
<keyword id="KW-0479">Metal-binding</keyword>
<keyword id="KW-0482">Metalloprotease</keyword>
<keyword id="KW-0645">Protease</keyword>
<keyword id="KW-0862">Zinc</keyword>
<sequence length="183" mass="21496">MTEMKILIVTLTYIEKSIIDEIVNNLSSYGLEVDILFDSRKYLPISAFNWERLQYDAEKVLSFLKSKYDFNYDSIIFLADSDGYIDGYNFVFGLTIDNFAIIFLNRLREEFYNRKPDLELFMKRVVKEVTHEAGHILGLGHCNTIGCVMNFSNTVEDVDKKQARFCKNCIYKIENLSKYLQRK</sequence>
<feature type="chain" id="PRO_1000216100" description="Archaemetzincin">
    <location>
        <begin position="1"/>
        <end position="183"/>
    </location>
</feature>
<feature type="active site" description="Proton acceptor" evidence="1">
    <location>
        <position position="132"/>
    </location>
</feature>
<feature type="binding site" evidence="1">
    <location>
        <position position="131"/>
    </location>
    <ligand>
        <name>Zn(2+)</name>
        <dbReference type="ChEBI" id="CHEBI:29105"/>
        <label>1</label>
        <note>catalytic</note>
    </ligand>
</feature>
<feature type="binding site" evidence="1">
    <location>
        <position position="135"/>
    </location>
    <ligand>
        <name>Zn(2+)</name>
        <dbReference type="ChEBI" id="CHEBI:29105"/>
        <label>1</label>
        <note>catalytic</note>
    </ligand>
</feature>
<feature type="binding site" evidence="1">
    <location>
        <position position="141"/>
    </location>
    <ligand>
        <name>Zn(2+)</name>
        <dbReference type="ChEBI" id="CHEBI:29105"/>
        <label>1</label>
        <note>catalytic</note>
    </ligand>
</feature>
<feature type="binding site" evidence="1">
    <location>
        <position position="142"/>
    </location>
    <ligand>
        <name>Zn(2+)</name>
        <dbReference type="ChEBI" id="CHEBI:29105"/>
        <label>2</label>
    </ligand>
</feature>
<feature type="binding site" evidence="1">
    <location>
        <position position="147"/>
    </location>
    <ligand>
        <name>Zn(2+)</name>
        <dbReference type="ChEBI" id="CHEBI:29105"/>
        <label>2</label>
    </ligand>
</feature>
<feature type="binding site" evidence="1">
    <location>
        <position position="166"/>
    </location>
    <ligand>
        <name>Zn(2+)</name>
        <dbReference type="ChEBI" id="CHEBI:29105"/>
        <label>2</label>
    </ligand>
</feature>
<feature type="binding site" evidence="1">
    <location>
        <position position="169"/>
    </location>
    <ligand>
        <name>Zn(2+)</name>
        <dbReference type="ChEBI" id="CHEBI:29105"/>
        <label>2</label>
    </ligand>
</feature>
<accession>C3NH77</accession>
<name>AMZA_SACI1</name>
<organism>
    <name type="scientific">Saccharolobus islandicus (strain Y.N.15.51 / Yellowstone #2)</name>
    <name type="common">Sulfolobus islandicus</name>
    <dbReference type="NCBI Taxonomy" id="419942"/>
    <lineage>
        <taxon>Archaea</taxon>
        <taxon>Thermoproteota</taxon>
        <taxon>Thermoprotei</taxon>
        <taxon>Sulfolobales</taxon>
        <taxon>Sulfolobaceae</taxon>
        <taxon>Saccharolobus</taxon>
    </lineage>
</organism>
<evidence type="ECO:0000255" key="1">
    <source>
        <dbReference type="HAMAP-Rule" id="MF_01842"/>
    </source>
</evidence>
<protein>
    <recommendedName>
        <fullName evidence="1">Archaemetzincin</fullName>
        <ecNumber evidence="1">3.4.-.-</ecNumber>
    </recommendedName>
</protein>
<gene>
    <name evidence="1" type="primary">amzA</name>
    <name type="ordered locus">YN1551_1395</name>
</gene>